<keyword id="KW-0067">ATP-binding</keyword>
<keyword id="KW-0143">Chaperone</keyword>
<keyword id="KW-0547">Nucleotide-binding</keyword>
<keyword id="KW-1185">Reference proteome</keyword>
<keyword id="KW-0346">Stress response</keyword>
<comment type="function">
    <text evidence="3 5">Molecular chaperone that assists in the folding or refolding of nascent or denatured proteins along with ATP hydrolysis (Probable). ATPase activity is highest in thermosome assemblies containing CCT1:CCT2, followed by assemblies containing CCT1:CCT2:CCT3. Required for thermosome ATPase activity. Not required for growth.</text>
</comment>
<comment type="subunit">
    <text evidence="2 3">The thermosome or CCT complex is a oligomeric complex of two octameric double-ring structures; the complex is probably a heterooligomer of CCT1, CCT2 and CCT3 with yet unknown stoichiometry.</text>
</comment>
<comment type="induction">
    <text evidence="2 4">By heat shock (at protein level).</text>
</comment>
<comment type="miscellaneous">
    <text>Can substitute for loss of cct2 or cct3. One of either cct1 or cct2 is required for growth.</text>
</comment>
<comment type="similarity">
    <text evidence="5">Belongs to the TCP-1 chaperonin family.</text>
</comment>
<evidence type="ECO:0000256" key="1">
    <source>
        <dbReference type="SAM" id="MobiDB-lite"/>
    </source>
</evidence>
<evidence type="ECO:0000269" key="2">
    <source>
    </source>
</evidence>
<evidence type="ECO:0000269" key="3">
    <source>
    </source>
</evidence>
<evidence type="ECO:0000269" key="4">
    <source>
    </source>
</evidence>
<evidence type="ECO:0000305" key="5"/>
<dbReference type="EMBL" id="AF010470">
    <property type="protein sequence ID" value="AAB81497.1"/>
    <property type="molecule type" value="Genomic_DNA"/>
</dbReference>
<dbReference type="EMBL" id="CP001956">
    <property type="protein sequence ID" value="ADE03512.1"/>
    <property type="molecule type" value="Genomic_DNA"/>
</dbReference>
<dbReference type="PIR" id="T48841">
    <property type="entry name" value="T48841"/>
</dbReference>
<dbReference type="SMR" id="O30561"/>
<dbReference type="STRING" id="309800.HVO_0133"/>
<dbReference type="PaxDb" id="309800-C498_18903"/>
<dbReference type="EnsemblBacteria" id="ADE03512">
    <property type="protein sequence ID" value="ADE03512"/>
    <property type="gene ID" value="HVO_0133"/>
</dbReference>
<dbReference type="KEGG" id="hvo:HVO_0133"/>
<dbReference type="eggNOG" id="arCOG01257">
    <property type="taxonomic scope" value="Archaea"/>
</dbReference>
<dbReference type="HOGENOM" id="CLU_008891_7_3_2"/>
<dbReference type="BRENDA" id="5.6.1.7">
    <property type="organism ID" value="2561"/>
</dbReference>
<dbReference type="Proteomes" id="UP000008243">
    <property type="component" value="Chromosome"/>
</dbReference>
<dbReference type="GO" id="GO:0005524">
    <property type="term" value="F:ATP binding"/>
    <property type="evidence" value="ECO:0007669"/>
    <property type="project" value="UniProtKB-KW"/>
</dbReference>
<dbReference type="GO" id="GO:0016887">
    <property type="term" value="F:ATP hydrolysis activity"/>
    <property type="evidence" value="ECO:0007669"/>
    <property type="project" value="InterPro"/>
</dbReference>
<dbReference type="GO" id="GO:0140662">
    <property type="term" value="F:ATP-dependent protein folding chaperone"/>
    <property type="evidence" value="ECO:0007669"/>
    <property type="project" value="InterPro"/>
</dbReference>
<dbReference type="GO" id="GO:0051082">
    <property type="term" value="F:unfolded protein binding"/>
    <property type="evidence" value="ECO:0007669"/>
    <property type="project" value="InterPro"/>
</dbReference>
<dbReference type="CDD" id="cd03343">
    <property type="entry name" value="cpn60"/>
    <property type="match status" value="1"/>
</dbReference>
<dbReference type="Gene3D" id="3.50.7.10">
    <property type="entry name" value="GroEL"/>
    <property type="match status" value="1"/>
</dbReference>
<dbReference type="Gene3D" id="1.10.560.10">
    <property type="entry name" value="GroEL-like equatorial domain"/>
    <property type="match status" value="1"/>
</dbReference>
<dbReference type="Gene3D" id="3.30.260.10">
    <property type="entry name" value="TCP-1-like chaperonin intermediate domain"/>
    <property type="match status" value="1"/>
</dbReference>
<dbReference type="InterPro" id="IPR017998">
    <property type="entry name" value="Chaperone_TCP-1"/>
</dbReference>
<dbReference type="InterPro" id="IPR002194">
    <property type="entry name" value="Chaperonin_TCP-1_CS"/>
</dbReference>
<dbReference type="InterPro" id="IPR002423">
    <property type="entry name" value="Cpn60/GroEL/TCP-1"/>
</dbReference>
<dbReference type="InterPro" id="IPR027409">
    <property type="entry name" value="GroEL-like_apical_dom_sf"/>
</dbReference>
<dbReference type="InterPro" id="IPR027413">
    <property type="entry name" value="GROEL-like_equatorial_sf"/>
</dbReference>
<dbReference type="InterPro" id="IPR027410">
    <property type="entry name" value="TCP-1-like_intermed_sf"/>
</dbReference>
<dbReference type="InterPro" id="IPR053374">
    <property type="entry name" value="TCP-1_chaperonin"/>
</dbReference>
<dbReference type="InterPro" id="IPR054827">
    <property type="entry name" value="thermosome_alpha"/>
</dbReference>
<dbReference type="InterPro" id="IPR012714">
    <property type="entry name" value="Thermosome_arc"/>
</dbReference>
<dbReference type="NCBIfam" id="NF041082">
    <property type="entry name" value="thermosome_alpha"/>
    <property type="match status" value="1"/>
</dbReference>
<dbReference type="NCBIfam" id="TIGR02339">
    <property type="entry name" value="thermosome_arch"/>
    <property type="match status" value="1"/>
</dbReference>
<dbReference type="NCBIfam" id="NF041083">
    <property type="entry name" value="thermosome_beta"/>
    <property type="match status" value="1"/>
</dbReference>
<dbReference type="PANTHER" id="PTHR11353">
    <property type="entry name" value="CHAPERONIN"/>
    <property type="match status" value="1"/>
</dbReference>
<dbReference type="Pfam" id="PF00118">
    <property type="entry name" value="Cpn60_TCP1"/>
    <property type="match status" value="1"/>
</dbReference>
<dbReference type="PRINTS" id="PR00304">
    <property type="entry name" value="TCOMPLEXTCP1"/>
</dbReference>
<dbReference type="SUPFAM" id="SSF52029">
    <property type="entry name" value="GroEL apical domain-like"/>
    <property type="match status" value="1"/>
</dbReference>
<dbReference type="SUPFAM" id="SSF48592">
    <property type="entry name" value="GroEL equatorial domain-like"/>
    <property type="match status" value="1"/>
</dbReference>
<dbReference type="SUPFAM" id="SSF54849">
    <property type="entry name" value="GroEL-intermediate domain like"/>
    <property type="match status" value="1"/>
</dbReference>
<dbReference type="PROSITE" id="PS00750">
    <property type="entry name" value="TCP1_1"/>
    <property type="match status" value="1"/>
</dbReference>
<dbReference type="PROSITE" id="PS00751">
    <property type="entry name" value="TCP1_2"/>
    <property type="match status" value="1"/>
</dbReference>
<dbReference type="PROSITE" id="PS00995">
    <property type="entry name" value="TCP1_3"/>
    <property type="match status" value="1"/>
</dbReference>
<feature type="chain" id="PRO_0000128387" description="Thermosome subunit 1">
    <location>
        <begin position="1"/>
        <end position="560"/>
    </location>
</feature>
<feature type="region of interest" description="Disordered" evidence="1">
    <location>
        <begin position="525"/>
        <end position="550"/>
    </location>
</feature>
<feature type="compositionally biased region" description="Gly residues" evidence="1">
    <location>
        <begin position="538"/>
        <end position="550"/>
    </location>
</feature>
<accession>O30561</accession>
<accession>D4GYX9</accession>
<name>THS1_HALVD</name>
<gene>
    <name type="primary">cct1</name>
    <name type="ordered locus">HVO_0133</name>
</gene>
<reference key="1">
    <citation type="journal article" date="1997" name="J. Bacteriol.">
        <title>Characterization of two heat shock genes from Haloferax volcanii: a model system for transcription regulation in the Archaea.</title>
        <authorList>
            <person name="Kuo Y.-P."/>
            <person name="Thompson D.K."/>
            <person name="St Jean A."/>
            <person name="Charlebois R.L."/>
            <person name="Daniels C.J."/>
        </authorList>
    </citation>
    <scope>NUCLEOTIDE SEQUENCE [GENOMIC DNA]</scope>
    <scope>INDUCTION</scope>
    <source>
        <strain>DS2 / DSM 5716 / WFD11</strain>
    </source>
</reference>
<reference key="2">
    <citation type="journal article" date="2010" name="PLoS ONE">
        <title>The complete genome sequence of Haloferax volcanii DS2, a model archaeon.</title>
        <authorList>
            <person name="Hartman A.L."/>
            <person name="Norais C."/>
            <person name="Badger J.H."/>
            <person name="Delmas S."/>
            <person name="Haldenby S."/>
            <person name="Madupu R."/>
            <person name="Robinson J."/>
            <person name="Khouri H."/>
            <person name="Ren Q."/>
            <person name="Lowe T.M."/>
            <person name="Maupin-Furlow J."/>
            <person name="Pohlschroder M."/>
            <person name="Daniels C."/>
            <person name="Pfeiffer F."/>
            <person name="Allers T."/>
            <person name="Eisen J.A."/>
        </authorList>
    </citation>
    <scope>NUCLEOTIDE SEQUENCE [LARGE SCALE GENOMIC DNA]</scope>
    <source>
        <strain>ATCC 29605 / DSM 3757 / JCM 8879 / NBRC 14742 / NCIMB 2012 / VKM B-1768 / DS2</strain>
    </source>
</reference>
<reference key="3">
    <citation type="journal article" date="2002" name="FEBS Lett.">
        <title>Properties of the chaperonin complex from the halophilic archaeon Haloferax volcanii.</title>
        <authorList>
            <person name="Large A.T."/>
            <person name="Kovacs E."/>
            <person name="Lund P.A."/>
        </authorList>
    </citation>
    <scope>ATPASE ACTIVITY</scope>
    <scope>SUBUNIT</scope>
    <scope>INDUCTION</scope>
    <source>
        <strain>DS2 / DS70</strain>
    </source>
</reference>
<reference key="4">
    <citation type="journal article" date="2006" name="Mol. Microbiol.">
        <title>All three chaperonin genes in the archaeon Haloferax volcanii are individually dispensable.</title>
        <authorList>
            <person name="Kapatai G."/>
            <person name="Large A."/>
            <person name="Benesch J.L."/>
            <person name="Robinson C.V."/>
            <person name="Carrascosa J.L."/>
            <person name="Valpuesta J.M."/>
            <person name="Gowrinathan P."/>
            <person name="Lund P.A."/>
        </authorList>
    </citation>
    <scope>FUNCTION</scope>
    <scope>SUBUNIT</scope>
    <scope>ELECTRON MICROSCOPY OF THE THERMOSOME</scope>
    <source>
        <strain>DS2 / DS70</strain>
    </source>
</reference>
<proteinExistence type="evidence at protein level"/>
<protein>
    <recommendedName>
        <fullName>Thermosome subunit 1</fullName>
    </recommendedName>
    <alternativeName>
        <fullName>Heat shock protein CCT1</fullName>
    </alternativeName>
</protein>
<organism>
    <name type="scientific">Haloferax volcanii (strain ATCC 29605 / DSM 3757 / JCM 8879 / NBRC 14742 / NCIMB 2012 / VKM B-1768 / DS2)</name>
    <name type="common">Halobacterium volcanii</name>
    <dbReference type="NCBI Taxonomy" id="309800"/>
    <lineage>
        <taxon>Archaea</taxon>
        <taxon>Methanobacteriati</taxon>
        <taxon>Methanobacteriota</taxon>
        <taxon>Stenosarchaea group</taxon>
        <taxon>Halobacteria</taxon>
        <taxon>Halobacteriales</taxon>
        <taxon>Haloferacaceae</taxon>
        <taxon>Haloferax</taxon>
    </lineage>
</organism>
<sequence length="560" mass="58925">MSQRMQQGQPMIILGEDSQRTSGQDAQSMNITAGKAVAEAVRTTLGPKGMDKMLVDSGGQVVVTNDGVTILKEMDIDHPAANMIVEVSETQEDEVGDGTTTAVINAGELLDQAEDLLDSDVHATTIAQGYRQAAEKAKEVLEDNAIEVTEDDRETLTKIAATAMTGKGAESAKDLLSELVVDAVLAVKDDDGIDTNNVSIEKVVGGTIDNSELVEGVIVDKERVDENMPYAVEDANIAILDDALEVRETEIDAEVNVTDPDQLQQFLDQEEKQLKEMVDQLVEVGADAVFVGDGIDDMAQHYLAKEGILAVRRAKSSDLKRLARATGGRVVSSLDDIEADDLGFAGSVGQKDVGGDERIFVEDVEDAKSVTLILRGGTEHVVDELERAIEDSLGVVRTTLEDGKVLPGGGAPETELSLQLREFADSVGGREQLAVEAFAEALDIIPRTLAENAGLDPIDSLVDLRSRHDGGEFAAGLDAYTGEVIDMEEEGVVEPLRVKTQAIESATEAAVMILRIDDVIAAGDLSGGQTGSDDDDGGAPGGMGGGMGGMGGMGGMGGAM</sequence>